<organism>
    <name type="scientific">Bos taurus</name>
    <name type="common">Bovine</name>
    <dbReference type="NCBI Taxonomy" id="9913"/>
    <lineage>
        <taxon>Eukaryota</taxon>
        <taxon>Metazoa</taxon>
        <taxon>Chordata</taxon>
        <taxon>Craniata</taxon>
        <taxon>Vertebrata</taxon>
        <taxon>Euteleostomi</taxon>
        <taxon>Mammalia</taxon>
        <taxon>Eutheria</taxon>
        <taxon>Laurasiatheria</taxon>
        <taxon>Artiodactyla</taxon>
        <taxon>Ruminantia</taxon>
        <taxon>Pecora</taxon>
        <taxon>Bovidae</taxon>
        <taxon>Bovinae</taxon>
        <taxon>Bos</taxon>
    </lineage>
</organism>
<sequence length="135" mass="15962">MPPNLTGYYRFVSQKNLEDYLQALNVNMALRKIALLLKPDKEIDQRGNHMTVKTLSTFRNYVLEFEVGVEFEEDLRTVDGRKCQTIVTWEEEQLVCVQKGEVPNRGWRLWLEEEMLYQEVTARDAVCQCVFRKVK</sequence>
<protein>
    <recommendedName>
        <fullName>Retinol-binding protein 5</fullName>
    </recommendedName>
    <alternativeName>
        <fullName>Cellular retinol-binding protein III</fullName>
        <shortName>CRBP-III</shortName>
    </alternativeName>
</protein>
<proteinExistence type="evidence at protein level"/>
<name>RET5_BOVIN</name>
<feature type="initiator methionine" description="Removed" evidence="2">
    <location>
        <position position="1"/>
    </location>
</feature>
<feature type="chain" id="PRO_0000067399" description="Retinol-binding protein 5">
    <location>
        <begin position="2"/>
        <end position="135"/>
    </location>
</feature>
<accession>P82708</accession>
<accession>A7MBF0</accession>
<reference key="1">
    <citation type="submission" date="2007-07" db="EMBL/GenBank/DDBJ databases">
        <authorList>
            <consortium name="NIH - Mammalian Gene Collection (MGC) project"/>
        </authorList>
    </citation>
    <scope>NUCLEOTIDE SEQUENCE [LARGE SCALE MRNA]</scope>
    <source>
        <strain>Hereford</strain>
        <tissue>Kidney</tissue>
    </source>
</reference>
<reference key="2">
    <citation type="journal article" date="2001" name="Proc. Natl. Acad. Sci. U.S.A.">
        <title>Identification, retinoid binding and X-ray analysis of a human retinol-binding protein.</title>
        <authorList>
            <person name="Folli C."/>
            <person name="Calderone V."/>
            <person name="Ottonello S."/>
            <person name="Bolchi A."/>
            <person name="Zanotti G."/>
            <person name="Stoppini M."/>
            <person name="Berni R."/>
        </authorList>
    </citation>
    <scope>PROTEIN SEQUENCE OF 2-43</scope>
    <scope>FUNCTION</scope>
    <source>
        <tissue>Kidney</tissue>
    </source>
</reference>
<dbReference type="EMBL" id="BC151528">
    <property type="protein sequence ID" value="AAI51529.1"/>
    <property type="molecule type" value="mRNA"/>
</dbReference>
<dbReference type="RefSeq" id="NP_001094662.1">
    <property type="nucleotide sequence ID" value="NM_001101192.2"/>
</dbReference>
<dbReference type="RefSeq" id="XP_005207216.1">
    <property type="nucleotide sequence ID" value="XM_005207159.5"/>
</dbReference>
<dbReference type="RefSeq" id="XP_015326795.1">
    <property type="nucleotide sequence ID" value="XM_015471309.3"/>
</dbReference>
<dbReference type="SMR" id="P82708"/>
<dbReference type="FunCoup" id="P82708">
    <property type="interactions" value="3"/>
</dbReference>
<dbReference type="STRING" id="9913.ENSBTAP00000010685"/>
<dbReference type="PaxDb" id="9913-ENSBTAP00000010685"/>
<dbReference type="Ensembl" id="ENSBTAT00000010685.6">
    <property type="protein sequence ID" value="ENSBTAP00000010685.4"/>
    <property type="gene ID" value="ENSBTAG00000008127.6"/>
</dbReference>
<dbReference type="GeneID" id="539418"/>
<dbReference type="KEGG" id="bta:539418"/>
<dbReference type="CTD" id="83758"/>
<dbReference type="VEuPathDB" id="HostDB:ENSBTAG00000008127"/>
<dbReference type="VGNC" id="VGNC:33816">
    <property type="gene designation" value="RBP5"/>
</dbReference>
<dbReference type="eggNOG" id="KOG4015">
    <property type="taxonomic scope" value="Eukaryota"/>
</dbReference>
<dbReference type="GeneTree" id="ENSGT00940000162526"/>
<dbReference type="HOGENOM" id="CLU_113772_5_1_1"/>
<dbReference type="InParanoid" id="P82708"/>
<dbReference type="OMA" id="NINMALR"/>
<dbReference type="OrthoDB" id="354351at2759"/>
<dbReference type="TreeFam" id="TF316894"/>
<dbReference type="Proteomes" id="UP000009136">
    <property type="component" value="Chromosome 5"/>
</dbReference>
<dbReference type="Bgee" id="ENSBTAG00000008127">
    <property type="expression patterns" value="Expressed in cortex of kidney and 19 other cell types or tissues"/>
</dbReference>
<dbReference type="GO" id="GO:0005829">
    <property type="term" value="C:cytosol"/>
    <property type="evidence" value="ECO:0000318"/>
    <property type="project" value="GO_Central"/>
</dbReference>
<dbReference type="GO" id="GO:0005634">
    <property type="term" value="C:nucleus"/>
    <property type="evidence" value="ECO:0000318"/>
    <property type="project" value="GO_Central"/>
</dbReference>
<dbReference type="GO" id="GO:0005504">
    <property type="term" value="F:fatty acid binding"/>
    <property type="evidence" value="ECO:0000318"/>
    <property type="project" value="GO_Central"/>
</dbReference>
<dbReference type="GO" id="GO:0016918">
    <property type="term" value="F:retinal binding"/>
    <property type="evidence" value="ECO:0007669"/>
    <property type="project" value="UniProtKB-KW"/>
</dbReference>
<dbReference type="GO" id="GO:0019841">
    <property type="term" value="F:retinol binding"/>
    <property type="evidence" value="ECO:0007669"/>
    <property type="project" value="UniProtKB-KW"/>
</dbReference>
<dbReference type="GO" id="GO:0015908">
    <property type="term" value="P:fatty acid transport"/>
    <property type="evidence" value="ECO:0000318"/>
    <property type="project" value="GO_Central"/>
</dbReference>
<dbReference type="CDD" id="cd19464">
    <property type="entry name" value="CRBP3"/>
    <property type="match status" value="1"/>
</dbReference>
<dbReference type="FunFam" id="2.40.128.20:FF:000001">
    <property type="entry name" value="Fatty acid-binding protein, adipocyte"/>
    <property type="match status" value="1"/>
</dbReference>
<dbReference type="Gene3D" id="2.40.128.20">
    <property type="match status" value="1"/>
</dbReference>
<dbReference type="InterPro" id="IPR012674">
    <property type="entry name" value="Calycin"/>
</dbReference>
<dbReference type="InterPro" id="IPR000463">
    <property type="entry name" value="Fatty_acid-bd"/>
</dbReference>
<dbReference type="InterPro" id="IPR031259">
    <property type="entry name" value="ILBP"/>
</dbReference>
<dbReference type="InterPro" id="IPR000566">
    <property type="entry name" value="Lipocln_cytosolic_FA-bd_dom"/>
</dbReference>
<dbReference type="PANTHER" id="PTHR11955">
    <property type="entry name" value="FATTY ACID BINDING PROTEIN"/>
    <property type="match status" value="1"/>
</dbReference>
<dbReference type="Pfam" id="PF00061">
    <property type="entry name" value="Lipocalin"/>
    <property type="match status" value="1"/>
</dbReference>
<dbReference type="PRINTS" id="PR00178">
    <property type="entry name" value="FATTYACIDBP"/>
</dbReference>
<dbReference type="SUPFAM" id="SSF50814">
    <property type="entry name" value="Lipocalins"/>
    <property type="match status" value="1"/>
</dbReference>
<evidence type="ECO:0000250" key="1"/>
<evidence type="ECO:0000269" key="2">
    <source>
    </source>
</evidence>
<evidence type="ECO:0000305" key="3"/>
<gene>
    <name type="primary">RBP5</name>
</gene>
<keyword id="KW-0963">Cytoplasm</keyword>
<keyword id="KW-0903">Direct protein sequencing</keyword>
<keyword id="KW-1185">Reference proteome</keyword>
<keyword id="KW-0683">Retinol-binding</keyword>
<keyword id="KW-0813">Transport</keyword>
<keyword id="KW-0845">Vitamin A</keyword>
<comment type="function">
    <text evidence="2">Intracellular transport of retinol.</text>
</comment>
<comment type="subcellular location">
    <subcellularLocation>
        <location evidence="1">Cytoplasm</location>
    </subcellularLocation>
</comment>
<comment type="tissue specificity">
    <text>Kidney.</text>
</comment>
<comment type="domain">
    <text evidence="1">Forms a beta-barrel structure that accommodates hydrophobic ligands in its interior.</text>
</comment>
<comment type="similarity">
    <text evidence="3">Belongs to the calycin superfamily. Fatty-acid binding protein (FABP) family.</text>
</comment>